<dbReference type="EMBL" id="CP000727">
    <property type="protein sequence ID" value="ABS38435.1"/>
    <property type="molecule type" value="Genomic_DNA"/>
</dbReference>
<dbReference type="EMBL" id="AM412317">
    <property type="protein sequence ID" value="CAL81565.1"/>
    <property type="molecule type" value="Genomic_DNA"/>
</dbReference>
<dbReference type="RefSeq" id="WP_011947903.1">
    <property type="nucleotide sequence ID" value="NC_009698.1"/>
</dbReference>
<dbReference type="RefSeq" id="YP_001252563.1">
    <property type="nucleotide sequence ID" value="NC_009495.1"/>
</dbReference>
<dbReference type="RefSeq" id="YP_001385973.1">
    <property type="nucleotide sequence ID" value="NC_009698.1"/>
</dbReference>
<dbReference type="SMR" id="A5HXQ7"/>
<dbReference type="GeneID" id="5184266"/>
<dbReference type="KEGG" id="cbh:CLC_0020"/>
<dbReference type="KEGG" id="cbo:CBO0011"/>
<dbReference type="PATRIC" id="fig|413999.7.peg.11"/>
<dbReference type="HOGENOM" id="CLU_007733_0_0_9"/>
<dbReference type="PRO" id="PR:A5HXQ7"/>
<dbReference type="Proteomes" id="UP000001986">
    <property type="component" value="Chromosome"/>
</dbReference>
<dbReference type="GO" id="GO:0005886">
    <property type="term" value="C:plasma membrane"/>
    <property type="evidence" value="ECO:0007669"/>
    <property type="project" value="UniProtKB-SubCell"/>
</dbReference>
<dbReference type="HAMAP" id="MF_01600">
    <property type="entry name" value="UPF0182"/>
    <property type="match status" value="1"/>
</dbReference>
<dbReference type="InterPro" id="IPR005372">
    <property type="entry name" value="UPF0182"/>
</dbReference>
<dbReference type="NCBIfam" id="NF000825">
    <property type="entry name" value="PRK00068.1"/>
    <property type="match status" value="1"/>
</dbReference>
<dbReference type="PANTHER" id="PTHR39344">
    <property type="entry name" value="UPF0182 PROTEIN SLL1060"/>
    <property type="match status" value="1"/>
</dbReference>
<dbReference type="PANTHER" id="PTHR39344:SF1">
    <property type="entry name" value="UPF0182 PROTEIN SLL1060"/>
    <property type="match status" value="1"/>
</dbReference>
<dbReference type="Pfam" id="PF03699">
    <property type="entry name" value="UPF0182"/>
    <property type="match status" value="1"/>
</dbReference>
<protein>
    <recommendedName>
        <fullName evidence="1">UPF0182 protein CBO0011/CLC_0020</fullName>
    </recommendedName>
</protein>
<comment type="subcellular location">
    <subcellularLocation>
        <location evidence="1">Cell membrane</location>
        <topology evidence="1">Multi-pass membrane protein</topology>
    </subcellularLocation>
</comment>
<comment type="similarity">
    <text evidence="1">Belongs to the UPF0182 family.</text>
</comment>
<organism>
    <name type="scientific">Clostridium botulinum (strain Hall / ATCC 3502 / NCTC 13319 / Type A)</name>
    <dbReference type="NCBI Taxonomy" id="441771"/>
    <lineage>
        <taxon>Bacteria</taxon>
        <taxon>Bacillati</taxon>
        <taxon>Bacillota</taxon>
        <taxon>Clostridia</taxon>
        <taxon>Eubacteriales</taxon>
        <taxon>Clostridiaceae</taxon>
        <taxon>Clostridium</taxon>
    </lineage>
</organism>
<accession>A5HXQ7</accession>
<accession>A7FZT7</accession>
<keyword id="KW-1003">Cell membrane</keyword>
<keyword id="KW-0472">Membrane</keyword>
<keyword id="KW-1185">Reference proteome</keyword>
<keyword id="KW-0812">Transmembrane</keyword>
<keyword id="KW-1133">Transmembrane helix</keyword>
<proteinExistence type="inferred from homology"/>
<name>Y011_CLOBH</name>
<gene>
    <name type="ordered locus">CBO0011</name>
    <name type="ordered locus">CLC_0020</name>
</gene>
<reference key="1">
    <citation type="journal article" date="2007" name="Genome Res.">
        <title>Genome sequence of a proteolytic (Group I) Clostridium botulinum strain Hall A and comparative analysis of the clostridial genomes.</title>
        <authorList>
            <person name="Sebaihia M."/>
            <person name="Peck M.W."/>
            <person name="Minton N.P."/>
            <person name="Thomson N.R."/>
            <person name="Holden M.T.G."/>
            <person name="Mitchell W.J."/>
            <person name="Carter A.T."/>
            <person name="Bentley S.D."/>
            <person name="Mason D.R."/>
            <person name="Crossman L."/>
            <person name="Paul C.J."/>
            <person name="Ivens A."/>
            <person name="Wells-Bennik M.H.J."/>
            <person name="Davis I.J."/>
            <person name="Cerdeno-Tarraga A.M."/>
            <person name="Churcher C."/>
            <person name="Quail M.A."/>
            <person name="Chillingworth T."/>
            <person name="Feltwell T."/>
            <person name="Fraser A."/>
            <person name="Goodhead I."/>
            <person name="Hance Z."/>
            <person name="Jagels K."/>
            <person name="Larke N."/>
            <person name="Maddison M."/>
            <person name="Moule S."/>
            <person name="Mungall K."/>
            <person name="Norbertczak H."/>
            <person name="Rabbinowitsch E."/>
            <person name="Sanders M."/>
            <person name="Simmonds M."/>
            <person name="White B."/>
            <person name="Whithead S."/>
            <person name="Parkhill J."/>
        </authorList>
    </citation>
    <scope>NUCLEOTIDE SEQUENCE [LARGE SCALE GENOMIC DNA]</scope>
    <source>
        <strain>Hall / ATCC 3502 / NCTC 13319 / Type A</strain>
    </source>
</reference>
<reference key="2">
    <citation type="journal article" date="2007" name="PLoS ONE">
        <title>Analysis of the neurotoxin complex genes in Clostridium botulinum A1-A4 and B1 strains: BoNT/A3, /Ba4 and /B1 clusters are located within plasmids.</title>
        <authorList>
            <person name="Smith T.J."/>
            <person name="Hill K.K."/>
            <person name="Foley B.T."/>
            <person name="Detter J.C."/>
            <person name="Munk A.C."/>
            <person name="Bruce D.C."/>
            <person name="Doggett N.A."/>
            <person name="Smith L.A."/>
            <person name="Marks J.D."/>
            <person name="Xie G."/>
            <person name="Brettin T.S."/>
        </authorList>
    </citation>
    <scope>NUCLEOTIDE SEQUENCE [LARGE SCALE GENOMIC DNA]</scope>
    <source>
        <strain>Hall / ATCC 3502 / NCTC 13319 / Type A</strain>
    </source>
</reference>
<evidence type="ECO:0000255" key="1">
    <source>
        <dbReference type="HAMAP-Rule" id="MF_01600"/>
    </source>
</evidence>
<sequence length="893" mass="104057">MKNKKALFIPLFIIILFIAFFNKIINFIINIKWFKEVNYLAVYFTKMRAIIILMIPIFIIFFISIWMYYKSLIINKNKSVVDIGLNKNNYGKKLFFIFNFIVSIFLAYIFSSSYWYRILQFNNSVDFNVKDPIFFKDVSFYIFKLPLFESLYKVIISLLLFLVITTFIAYFILEAKYKIQSKKDINLKNINHGIKSFAGKQLAIVSGLIILFISFGHLIKIWNLVYSSNGVSFGASYTDVHATLLFYKIIVVITLISSIVTLLSIVKGKFKPVSICIGITIFLIVSQNIASFLVQNFIVKSNEKTLEQPYIKNNIDLTRKAFALDDIEIRDFDIKNDLQKQDITDNKASIDNIRINSFKPTLEFYNQVQIIRYYYTFNDIDIDRYNINGKYNQVFLAAREIDTDALNPNTWQNRHLIYTHGFGAVMNKVNSVTSEGQPDFVIKDIPPYNKTNIKLANPRIYFGEKTNDYVIVNTKINEFDYPKEDSNKTNKYNGHAGIKMSFINRLLFAINKKDINFLLSKDIKKDSKIIINRNIVERAKKIAPFLTYDSDPYMVIYNGKIYWIIDAYTTTNRYPYSEPYDSINYIRNSAKVVIDSVDGDINFYITDKKDPIVNNYAKIFKGLFKEEKDAPKEIREHFRYPKDLFSIQSKVLGKYHVKDPGVFYNGEDLWEVSKDQKHVEGETNTNDAPYIIMKLPDQNKEEMVLLNYFNVMKKDNMIALFGARMDGEQYGKKILYKLPSDKTVYSPYLFKQKINQDTNISKELSLWNREGSKVQYGDTIILPIKNSLLYIEPLYLRASGKNSIPEMKRVILSYNDKLVLSSSIQEGIKEIFNSKDNKINDKNEKDSTKTIDDSKLKKAQEYYNKAIEAQKNGDWTKYGENINELGNILNSIK</sequence>
<feature type="chain" id="PRO_0000335541" description="UPF0182 protein CBO0011/CLC_0020">
    <location>
        <begin position="1"/>
        <end position="893"/>
    </location>
</feature>
<feature type="transmembrane region" description="Helical" evidence="1">
    <location>
        <begin position="9"/>
        <end position="29"/>
    </location>
</feature>
<feature type="transmembrane region" description="Helical" evidence="1">
    <location>
        <begin position="49"/>
        <end position="69"/>
    </location>
</feature>
<feature type="transmembrane region" description="Helical" evidence="1">
    <location>
        <begin position="94"/>
        <end position="114"/>
    </location>
</feature>
<feature type="transmembrane region" description="Helical" evidence="1">
    <location>
        <begin position="154"/>
        <end position="174"/>
    </location>
</feature>
<feature type="transmembrane region" description="Helical" evidence="1">
    <location>
        <begin position="202"/>
        <end position="222"/>
    </location>
</feature>
<feature type="transmembrane region" description="Helical" evidence="1">
    <location>
        <begin position="246"/>
        <end position="266"/>
    </location>
</feature>
<feature type="transmembrane region" description="Helical" evidence="1">
    <location>
        <begin position="273"/>
        <end position="293"/>
    </location>
</feature>